<feature type="chain" id="PRO_1000072711" description="UPF0250 protein VC0395_A0469/VC395_0960">
    <location>
        <begin position="1"/>
        <end position="92"/>
    </location>
</feature>
<dbReference type="EMBL" id="CP000627">
    <property type="protein sequence ID" value="ABQ21388.1"/>
    <property type="molecule type" value="Genomic_DNA"/>
</dbReference>
<dbReference type="EMBL" id="CP001235">
    <property type="protein sequence ID" value="ACP08972.1"/>
    <property type="molecule type" value="Genomic_DNA"/>
</dbReference>
<dbReference type="SMR" id="A5F2Y2"/>
<dbReference type="KEGG" id="vco:VC0395_A0469"/>
<dbReference type="KEGG" id="vcr:VC395_0960"/>
<dbReference type="PATRIC" id="fig|345073.21.peg.931"/>
<dbReference type="eggNOG" id="COG2921">
    <property type="taxonomic scope" value="Bacteria"/>
</dbReference>
<dbReference type="HOGENOM" id="CLU_161438_2_1_6"/>
<dbReference type="OrthoDB" id="9793424at2"/>
<dbReference type="Proteomes" id="UP000000249">
    <property type="component" value="Chromosome 2"/>
</dbReference>
<dbReference type="GO" id="GO:0005829">
    <property type="term" value="C:cytosol"/>
    <property type="evidence" value="ECO:0007669"/>
    <property type="project" value="TreeGrafter"/>
</dbReference>
<dbReference type="FunFam" id="3.30.70.260:FF:000002">
    <property type="entry name" value="UPF0250 protein YbeD"/>
    <property type="match status" value="1"/>
</dbReference>
<dbReference type="Gene3D" id="3.30.70.260">
    <property type="match status" value="1"/>
</dbReference>
<dbReference type="HAMAP" id="MF_00659">
    <property type="entry name" value="UPF0250"/>
    <property type="match status" value="1"/>
</dbReference>
<dbReference type="InterPro" id="IPR007454">
    <property type="entry name" value="UPF0250_YbeD-like"/>
</dbReference>
<dbReference type="InterPro" id="IPR027471">
    <property type="entry name" value="YbeD-like_sf"/>
</dbReference>
<dbReference type="NCBIfam" id="NF003447">
    <property type="entry name" value="PRK04998.1"/>
    <property type="match status" value="1"/>
</dbReference>
<dbReference type="PANTHER" id="PTHR38036">
    <property type="entry name" value="UPF0250 PROTEIN YBED"/>
    <property type="match status" value="1"/>
</dbReference>
<dbReference type="PANTHER" id="PTHR38036:SF1">
    <property type="entry name" value="UPF0250 PROTEIN YBED"/>
    <property type="match status" value="1"/>
</dbReference>
<dbReference type="Pfam" id="PF04359">
    <property type="entry name" value="DUF493"/>
    <property type="match status" value="1"/>
</dbReference>
<dbReference type="SUPFAM" id="SSF117991">
    <property type="entry name" value="YbeD/HP0495-like"/>
    <property type="match status" value="1"/>
</dbReference>
<accession>A5F2Y2</accession>
<accession>C3LYV6</accession>
<proteinExistence type="inferred from homology"/>
<comment type="similarity">
    <text evidence="1">Belongs to the UPF0250 family.</text>
</comment>
<organism>
    <name type="scientific">Vibrio cholerae serotype O1 (strain ATCC 39541 / Classical Ogawa 395 / O395)</name>
    <dbReference type="NCBI Taxonomy" id="345073"/>
    <lineage>
        <taxon>Bacteria</taxon>
        <taxon>Pseudomonadati</taxon>
        <taxon>Pseudomonadota</taxon>
        <taxon>Gammaproteobacteria</taxon>
        <taxon>Vibrionales</taxon>
        <taxon>Vibrionaceae</taxon>
        <taxon>Vibrio</taxon>
    </lineage>
</organism>
<protein>
    <recommendedName>
        <fullName evidence="1">UPF0250 protein VC0395_A0469/VC395_0960</fullName>
    </recommendedName>
</protein>
<sequence>MLNINSDAKLKDLLEFPCSFTYKVMGHAKPELPERVLEVIQRHAPGDYSPRVKPSAKGNYHSVSVTIHATSIEQVEILYKELGEIDIVRMVL</sequence>
<reference key="1">
    <citation type="submission" date="2007-03" db="EMBL/GenBank/DDBJ databases">
        <authorList>
            <person name="Heidelberg J."/>
        </authorList>
    </citation>
    <scope>NUCLEOTIDE SEQUENCE [LARGE SCALE GENOMIC DNA]</scope>
    <source>
        <strain>ATCC 39541 / Classical Ogawa 395 / O395</strain>
    </source>
</reference>
<reference key="2">
    <citation type="journal article" date="2008" name="PLoS ONE">
        <title>A recalibrated molecular clock and independent origins for the cholera pandemic clones.</title>
        <authorList>
            <person name="Feng L."/>
            <person name="Reeves P.R."/>
            <person name="Lan R."/>
            <person name="Ren Y."/>
            <person name="Gao C."/>
            <person name="Zhou Z."/>
            <person name="Ren Y."/>
            <person name="Cheng J."/>
            <person name="Wang W."/>
            <person name="Wang J."/>
            <person name="Qian W."/>
            <person name="Li D."/>
            <person name="Wang L."/>
        </authorList>
    </citation>
    <scope>NUCLEOTIDE SEQUENCE [LARGE SCALE GENOMIC DNA]</scope>
    <source>
        <strain>ATCC 39541 / Classical Ogawa 395 / O395</strain>
    </source>
</reference>
<gene>
    <name type="ordered locus">VC0395_A0469</name>
    <name type="ordered locus">VC395_0960</name>
</gene>
<name>Y1669_VIBC3</name>
<evidence type="ECO:0000255" key="1">
    <source>
        <dbReference type="HAMAP-Rule" id="MF_00659"/>
    </source>
</evidence>